<gene>
    <name evidence="1" type="primary">flhC</name>
    <name type="ordered locus">H16_B0919</name>
</gene>
<accession>Q0K2R3</accession>
<name>FLHC_CUPNH</name>
<comment type="function">
    <text evidence="1">Functions in complex with FlhD as a master transcriptional regulator that regulates transcription of several flagellar and non-flagellar operons by binding to their promoter region. Activates expression of class 2 flagellar genes, including fliA, which is a flagellum-specific sigma factor that turns on the class 3 genes. Also regulates genes whose products function in a variety of physiological pathways.</text>
</comment>
<comment type="cofactor">
    <cofactor evidence="1">
        <name>Zn(2+)</name>
        <dbReference type="ChEBI" id="CHEBI:29105"/>
    </cofactor>
    <text evidence="1">Binds 1 zinc ion per subunit.</text>
</comment>
<comment type="subunit">
    <text evidence="1">Heterohexamer composed of two FlhC and four FlhD subunits. Each FlhC binds a FlhD dimer, forming a heterotrimer, and a hexamer assembles by dimerization of two heterotrimers.</text>
</comment>
<comment type="subcellular location">
    <subcellularLocation>
        <location evidence="1">Cytoplasm</location>
    </subcellularLocation>
</comment>
<comment type="similarity">
    <text evidence="1">Belongs to the FlhC family.</text>
</comment>
<protein>
    <recommendedName>
        <fullName evidence="1">Flagellar transcriptional regulator FlhC</fullName>
    </recommendedName>
</protein>
<proteinExistence type="inferred from homology"/>
<sequence>MDVHDIAGTAVAGSPAPVPRARPPRPGKSMLQDVEQIRLAIEMIGLGARLQVLESEVSLPRVRLIRLYKELCGVSPPKGMLPFSTDWFVSWRPNAHASMLLGAYRFMTSRGSLDGIRAVLSSYRMYREQLCATGEASQLSFTRAWTLVRFYERGMLRLARCRDCRGEYVVQADDARHRYVCGLCLPPARAGKGRKPAPAALAG</sequence>
<keyword id="KW-0010">Activator</keyword>
<keyword id="KW-1005">Bacterial flagellum biogenesis</keyword>
<keyword id="KW-0963">Cytoplasm</keyword>
<keyword id="KW-0238">DNA-binding</keyword>
<keyword id="KW-0479">Metal-binding</keyword>
<keyword id="KW-1185">Reference proteome</keyword>
<keyword id="KW-0804">Transcription</keyword>
<keyword id="KW-0805">Transcription regulation</keyword>
<keyword id="KW-0862">Zinc</keyword>
<dbReference type="EMBL" id="AM260480">
    <property type="protein sequence ID" value="CAJ95711.1"/>
    <property type="molecule type" value="Genomic_DNA"/>
</dbReference>
<dbReference type="RefSeq" id="WP_011616889.1">
    <property type="nucleotide sequence ID" value="NC_008314.1"/>
</dbReference>
<dbReference type="SMR" id="Q0K2R3"/>
<dbReference type="STRING" id="381666.H16_B0919"/>
<dbReference type="KEGG" id="reh:H16_B0919"/>
<dbReference type="eggNOG" id="ENOG50310WH">
    <property type="taxonomic scope" value="Bacteria"/>
</dbReference>
<dbReference type="HOGENOM" id="CLU_122824_0_0_4"/>
<dbReference type="OrthoDB" id="5570801at2"/>
<dbReference type="Proteomes" id="UP000008210">
    <property type="component" value="Chromosome 2"/>
</dbReference>
<dbReference type="GO" id="GO:0005737">
    <property type="term" value="C:cytoplasm"/>
    <property type="evidence" value="ECO:0007669"/>
    <property type="project" value="UniProtKB-SubCell"/>
</dbReference>
<dbReference type="GO" id="GO:0003677">
    <property type="term" value="F:DNA binding"/>
    <property type="evidence" value="ECO:0007669"/>
    <property type="project" value="UniProtKB-UniRule"/>
</dbReference>
<dbReference type="GO" id="GO:0008270">
    <property type="term" value="F:zinc ion binding"/>
    <property type="evidence" value="ECO:0007669"/>
    <property type="project" value="UniProtKB-UniRule"/>
</dbReference>
<dbReference type="GO" id="GO:0044781">
    <property type="term" value="P:bacterial-type flagellum organization"/>
    <property type="evidence" value="ECO:0007669"/>
    <property type="project" value="UniProtKB-KW"/>
</dbReference>
<dbReference type="GO" id="GO:0045893">
    <property type="term" value="P:positive regulation of DNA-templated transcription"/>
    <property type="evidence" value="ECO:0007669"/>
    <property type="project" value="InterPro"/>
</dbReference>
<dbReference type="GO" id="GO:1902208">
    <property type="term" value="P:regulation of bacterial-type flagellum assembly"/>
    <property type="evidence" value="ECO:0007669"/>
    <property type="project" value="UniProtKB-UniRule"/>
</dbReference>
<dbReference type="HAMAP" id="MF_01891">
    <property type="entry name" value="FhlC"/>
    <property type="match status" value="1"/>
</dbReference>
<dbReference type="InterPro" id="IPR007944">
    <property type="entry name" value="FlhC"/>
</dbReference>
<dbReference type="NCBIfam" id="NF009365">
    <property type="entry name" value="PRK12722.1"/>
    <property type="match status" value="1"/>
</dbReference>
<dbReference type="Pfam" id="PF05280">
    <property type="entry name" value="FlhC"/>
    <property type="match status" value="1"/>
</dbReference>
<dbReference type="PIRSF" id="PIRSF003159">
    <property type="entry name" value="FlhC"/>
    <property type="match status" value="1"/>
</dbReference>
<dbReference type="SUPFAM" id="SSF160930">
    <property type="entry name" value="FlhC-like"/>
    <property type="match status" value="1"/>
</dbReference>
<evidence type="ECO:0000255" key="1">
    <source>
        <dbReference type="HAMAP-Rule" id="MF_01891"/>
    </source>
</evidence>
<feature type="chain" id="PRO_0000406758" description="Flagellar transcriptional regulator FlhC">
    <location>
        <begin position="1"/>
        <end position="203"/>
    </location>
</feature>
<feature type="binding site" evidence="1">
    <location>
        <position position="161"/>
    </location>
    <ligand>
        <name>Zn(2+)</name>
        <dbReference type="ChEBI" id="CHEBI:29105"/>
    </ligand>
</feature>
<feature type="binding site" evidence="1">
    <location>
        <position position="164"/>
    </location>
    <ligand>
        <name>Zn(2+)</name>
        <dbReference type="ChEBI" id="CHEBI:29105"/>
    </ligand>
</feature>
<feature type="binding site" evidence="1">
    <location>
        <position position="181"/>
    </location>
    <ligand>
        <name>Zn(2+)</name>
        <dbReference type="ChEBI" id="CHEBI:29105"/>
    </ligand>
</feature>
<feature type="binding site" evidence="1">
    <location>
        <position position="184"/>
    </location>
    <ligand>
        <name>Zn(2+)</name>
        <dbReference type="ChEBI" id="CHEBI:29105"/>
    </ligand>
</feature>
<reference key="1">
    <citation type="journal article" date="2006" name="Nat. Biotechnol.">
        <title>Genome sequence of the bioplastic-producing 'Knallgas' bacterium Ralstonia eutropha H16.</title>
        <authorList>
            <person name="Pohlmann A."/>
            <person name="Fricke W.F."/>
            <person name="Reinecke F."/>
            <person name="Kusian B."/>
            <person name="Liesegang H."/>
            <person name="Cramm R."/>
            <person name="Eitinger T."/>
            <person name="Ewering C."/>
            <person name="Poetter M."/>
            <person name="Schwartz E."/>
            <person name="Strittmatter A."/>
            <person name="Voss I."/>
            <person name="Gottschalk G."/>
            <person name="Steinbuechel A."/>
            <person name="Friedrich B."/>
            <person name="Bowien B."/>
        </authorList>
    </citation>
    <scope>NUCLEOTIDE SEQUENCE [LARGE SCALE GENOMIC DNA]</scope>
    <source>
        <strain>ATCC 17699 / DSM 428 / KCTC 22496 / NCIMB 10442 / H16 / Stanier 337</strain>
    </source>
</reference>
<organism>
    <name type="scientific">Cupriavidus necator (strain ATCC 17699 / DSM 428 / KCTC 22496 / NCIMB 10442 / H16 / Stanier 337)</name>
    <name type="common">Ralstonia eutropha</name>
    <dbReference type="NCBI Taxonomy" id="381666"/>
    <lineage>
        <taxon>Bacteria</taxon>
        <taxon>Pseudomonadati</taxon>
        <taxon>Pseudomonadota</taxon>
        <taxon>Betaproteobacteria</taxon>
        <taxon>Burkholderiales</taxon>
        <taxon>Burkholderiaceae</taxon>
        <taxon>Cupriavidus</taxon>
    </lineage>
</organism>